<accession>Q09295</accession>
<feature type="chain" id="PRO_0000082015" description="Putative RNA-binding protein EEED8.4">
    <location>
        <begin position="1"/>
        <end position="191"/>
    </location>
</feature>
<feature type="domain" description="RRM" evidence="1">
    <location>
        <begin position="55"/>
        <end position="132"/>
    </location>
</feature>
<feature type="region of interest" description="Disordered" evidence="2">
    <location>
        <begin position="136"/>
        <end position="160"/>
    </location>
</feature>
<evidence type="ECO:0000255" key="1">
    <source>
        <dbReference type="PROSITE-ProRule" id="PRU00176"/>
    </source>
</evidence>
<evidence type="ECO:0000256" key="2">
    <source>
        <dbReference type="SAM" id="MobiDB-lite"/>
    </source>
</evidence>
<reference key="1">
    <citation type="journal article" date="1998" name="Science">
        <title>Genome sequence of the nematode C. elegans: a platform for investigating biology.</title>
        <authorList>
            <consortium name="The C. elegans sequencing consortium"/>
        </authorList>
    </citation>
    <scope>NUCLEOTIDE SEQUENCE [LARGE SCALE GENOMIC DNA]</scope>
    <source>
        <strain>Bristol N2</strain>
    </source>
</reference>
<keyword id="KW-1185">Reference proteome</keyword>
<keyword id="KW-0694">RNA-binding</keyword>
<name>YQO4_CAEEL</name>
<proteinExistence type="predicted"/>
<protein>
    <recommendedName>
        <fullName>Putative RNA-binding protein EEED8.4</fullName>
    </recommendedName>
</protein>
<organism>
    <name type="scientific">Caenorhabditis elegans</name>
    <dbReference type="NCBI Taxonomy" id="6239"/>
    <lineage>
        <taxon>Eukaryota</taxon>
        <taxon>Metazoa</taxon>
        <taxon>Ecdysozoa</taxon>
        <taxon>Nematoda</taxon>
        <taxon>Chromadorea</taxon>
        <taxon>Rhabditida</taxon>
        <taxon>Rhabditina</taxon>
        <taxon>Rhabditomorpha</taxon>
        <taxon>Rhabditoidea</taxon>
        <taxon>Rhabditidae</taxon>
        <taxon>Peloderinae</taxon>
        <taxon>Caenorhabditis</taxon>
    </lineage>
</organism>
<sequence length="191" mass="21027">MATITADNNSNSHFEMEIEAESAILQQIQNKMAKHLESAAYVPPTEEEQKAIDAKSVFIGNVDFNSTIEEIEEHFKGCGQIVKTTIPKDKFTKKQKNFAYIEFDDSSSIENALVMNGSLFRSRPIVVTAKRTNIPGMGHGVRGSSRGTFGRGRGAARGAPGRQQTVVVKYVYVNGPNRGGRGGRGRRFNPY</sequence>
<dbReference type="EMBL" id="FO081042">
    <property type="protein sequence ID" value="CCD68731.1"/>
    <property type="molecule type" value="Genomic_DNA"/>
</dbReference>
<dbReference type="PIR" id="T15924">
    <property type="entry name" value="T15924"/>
</dbReference>
<dbReference type="RefSeq" id="NP_495022.2">
    <property type="nucleotide sequence ID" value="NM_062621.7"/>
</dbReference>
<dbReference type="SMR" id="Q09295"/>
<dbReference type="BioGRID" id="39265">
    <property type="interactions" value="1"/>
</dbReference>
<dbReference type="FunCoup" id="Q09295">
    <property type="interactions" value="230"/>
</dbReference>
<dbReference type="STRING" id="6239.EEED8.4.1"/>
<dbReference type="PaxDb" id="6239-EEED8.4"/>
<dbReference type="EnsemblMetazoa" id="EEED8.4.1">
    <property type="protein sequence ID" value="EEED8.4.1"/>
    <property type="gene ID" value="WBGene00017135"/>
</dbReference>
<dbReference type="EnsemblMetazoa" id="EEED8.4.2">
    <property type="protein sequence ID" value="EEED8.4.2"/>
    <property type="gene ID" value="WBGene00017135"/>
</dbReference>
<dbReference type="GeneID" id="173921"/>
<dbReference type="KEGG" id="cel:CELE_EEED8.4"/>
<dbReference type="UCSC" id="EEED8.4">
    <property type="organism name" value="c. elegans"/>
</dbReference>
<dbReference type="AGR" id="WB:WBGene00017135"/>
<dbReference type="CTD" id="173921"/>
<dbReference type="WormBase" id="EEED8.4">
    <property type="protein sequence ID" value="CE39716"/>
    <property type="gene ID" value="WBGene00017135"/>
</dbReference>
<dbReference type="eggNOG" id="KOG4209">
    <property type="taxonomic scope" value="Eukaryota"/>
</dbReference>
<dbReference type="GeneTree" id="ENSGT00970000196177"/>
<dbReference type="HOGENOM" id="CLU_012062_23_3_1"/>
<dbReference type="InParanoid" id="Q09295"/>
<dbReference type="OMA" id="NSHFEME"/>
<dbReference type="OrthoDB" id="4726at2759"/>
<dbReference type="PhylomeDB" id="Q09295"/>
<dbReference type="PRO" id="PR:Q09295"/>
<dbReference type="Proteomes" id="UP000001940">
    <property type="component" value="Chromosome II"/>
</dbReference>
<dbReference type="Bgee" id="WBGene00017135">
    <property type="expression patterns" value="Expressed in embryo and 4 other cell types or tissues"/>
</dbReference>
<dbReference type="GO" id="GO:0005634">
    <property type="term" value="C:nucleus"/>
    <property type="evidence" value="ECO:0000318"/>
    <property type="project" value="GO_Central"/>
</dbReference>
<dbReference type="GO" id="GO:0008143">
    <property type="term" value="F:poly(A) binding"/>
    <property type="evidence" value="ECO:0000318"/>
    <property type="project" value="GO_Central"/>
</dbReference>
<dbReference type="CDD" id="cd12306">
    <property type="entry name" value="RRM_II_PABPs"/>
    <property type="match status" value="1"/>
</dbReference>
<dbReference type="Gene3D" id="3.30.70.330">
    <property type="match status" value="1"/>
</dbReference>
<dbReference type="InterPro" id="IPR012677">
    <property type="entry name" value="Nucleotide-bd_a/b_plait_sf"/>
</dbReference>
<dbReference type="InterPro" id="IPR035979">
    <property type="entry name" value="RBD_domain_sf"/>
</dbReference>
<dbReference type="InterPro" id="IPR000504">
    <property type="entry name" value="RRM_dom"/>
</dbReference>
<dbReference type="PANTHER" id="PTHR23236">
    <property type="entry name" value="EUKARYOTIC TRANSLATION INITIATION FACTOR 4B/4H"/>
    <property type="match status" value="1"/>
</dbReference>
<dbReference type="PANTHER" id="PTHR23236:SF23">
    <property type="entry name" value="RNA-BINDING PROTEIN EEED8.12-RELATED"/>
    <property type="match status" value="1"/>
</dbReference>
<dbReference type="Pfam" id="PF00076">
    <property type="entry name" value="RRM_1"/>
    <property type="match status" value="1"/>
</dbReference>
<dbReference type="SMART" id="SM00360">
    <property type="entry name" value="RRM"/>
    <property type="match status" value="1"/>
</dbReference>
<dbReference type="SUPFAM" id="SSF54928">
    <property type="entry name" value="RNA-binding domain, RBD"/>
    <property type="match status" value="1"/>
</dbReference>
<dbReference type="PROSITE" id="PS50102">
    <property type="entry name" value="RRM"/>
    <property type="match status" value="1"/>
</dbReference>
<gene>
    <name type="ORF">EEED8.4</name>
</gene>